<organism>
    <name type="scientific">Drosophila pseudoobscura pseudoobscura</name>
    <name type="common">Fruit fly</name>
    <dbReference type="NCBI Taxonomy" id="46245"/>
    <lineage>
        <taxon>Eukaryota</taxon>
        <taxon>Metazoa</taxon>
        <taxon>Ecdysozoa</taxon>
        <taxon>Arthropoda</taxon>
        <taxon>Hexapoda</taxon>
        <taxon>Insecta</taxon>
        <taxon>Pterygota</taxon>
        <taxon>Neoptera</taxon>
        <taxon>Endopterygota</taxon>
        <taxon>Diptera</taxon>
        <taxon>Brachycera</taxon>
        <taxon>Muscomorpha</taxon>
        <taxon>Ephydroidea</taxon>
        <taxon>Drosophilidae</taxon>
        <taxon>Drosophila</taxon>
        <taxon>Sophophora</taxon>
    </lineage>
</organism>
<proteinExistence type="inferred from homology"/>
<name>SWS_DROPS</name>
<keyword id="KW-0217">Developmental protein</keyword>
<keyword id="KW-0256">Endoplasmic reticulum</keyword>
<keyword id="KW-0378">Hydrolase</keyword>
<keyword id="KW-0442">Lipid degradation</keyword>
<keyword id="KW-0443">Lipid metabolism</keyword>
<keyword id="KW-0472">Membrane</keyword>
<keyword id="KW-0524">Neurogenesis</keyword>
<keyword id="KW-0597">Phosphoprotein</keyword>
<keyword id="KW-1185">Reference proteome</keyword>
<keyword id="KW-0812">Transmembrane</keyword>
<keyword id="KW-1133">Transmembrane helix</keyword>
<feature type="chain" id="PRO_0000389225" description="Neuropathy target esterase sws">
    <location>
        <begin position="1"/>
        <end position="1494"/>
    </location>
</feature>
<feature type="topological domain" description="Lumenal" evidence="3">
    <location>
        <begin position="1"/>
        <end position="35"/>
    </location>
</feature>
<feature type="transmembrane region" description="Helical" evidence="3">
    <location>
        <begin position="36"/>
        <end position="56"/>
    </location>
</feature>
<feature type="topological domain" description="Cytoplasmic" evidence="3">
    <location>
        <begin position="57"/>
        <end position="1494"/>
    </location>
</feature>
<feature type="domain" description="PNPLA" evidence="4">
    <location>
        <begin position="944"/>
        <end position="1110"/>
    </location>
</feature>
<feature type="region of interest" description="Disordered" evidence="5">
    <location>
        <begin position="362"/>
        <end position="405"/>
    </location>
</feature>
<feature type="region of interest" description="Disordered" evidence="5">
    <location>
        <begin position="422"/>
        <end position="452"/>
    </location>
</feature>
<feature type="region of interest" description="Disordered" evidence="5">
    <location>
        <begin position="1367"/>
        <end position="1494"/>
    </location>
</feature>
<feature type="short sequence motif" description="GXGXXG" evidence="4">
    <location>
        <begin position="948"/>
        <end position="953"/>
    </location>
</feature>
<feature type="short sequence motif" description="GXSXG" evidence="4">
    <location>
        <begin position="975"/>
        <end position="979"/>
    </location>
</feature>
<feature type="short sequence motif" description="DGA/G" evidence="4">
    <location>
        <begin position="1097"/>
        <end position="1099"/>
    </location>
</feature>
<feature type="compositionally biased region" description="Low complexity" evidence="5">
    <location>
        <begin position="362"/>
        <end position="372"/>
    </location>
</feature>
<feature type="compositionally biased region" description="Polar residues" evidence="5">
    <location>
        <begin position="435"/>
        <end position="449"/>
    </location>
</feature>
<feature type="compositionally biased region" description="Polar residues" evidence="5">
    <location>
        <begin position="1370"/>
        <end position="1381"/>
    </location>
</feature>
<feature type="compositionally biased region" description="Basic and acidic residues" evidence="5">
    <location>
        <begin position="1389"/>
        <end position="1420"/>
    </location>
</feature>
<feature type="compositionally biased region" description="Basic and acidic residues" evidence="5">
    <location>
        <begin position="1452"/>
        <end position="1483"/>
    </location>
</feature>
<feature type="compositionally biased region" description="Polar residues" evidence="5">
    <location>
        <begin position="1484"/>
        <end position="1494"/>
    </location>
</feature>
<feature type="active site" description="Nucleophile" evidence="4">
    <location>
        <position position="977"/>
    </location>
</feature>
<feature type="active site" description="Proton acceptor" evidence="4">
    <location>
        <position position="1097"/>
    </location>
</feature>
<feature type="binding site" evidence="3">
    <location>
        <begin position="176"/>
        <end position="303"/>
    </location>
    <ligand>
        <name>a nucleoside 3',5'-cyclic phosphate</name>
        <dbReference type="ChEBI" id="CHEBI:58464"/>
        <label>1</label>
    </ligand>
</feature>
<feature type="binding site" evidence="3">
    <location>
        <begin position="474"/>
        <end position="601"/>
    </location>
    <ligand>
        <name>a nucleoside 3',5'-cyclic phosphate</name>
        <dbReference type="ChEBI" id="CHEBI:58464"/>
        <label>2</label>
    </ligand>
</feature>
<feature type="binding site" evidence="3">
    <location>
        <begin position="590"/>
        <end position="717"/>
    </location>
    <ligand>
        <name>a nucleoside 3',5'-cyclic phosphate</name>
        <dbReference type="ChEBI" id="CHEBI:58464"/>
        <label>3</label>
    </ligand>
</feature>
<feature type="modified residue" description="Phosphoserine" evidence="2">
    <location>
        <position position="443"/>
    </location>
</feature>
<reference evidence="6" key="1">
    <citation type="journal article" date="2005" name="Genome Res.">
        <title>Comparative genome sequencing of Drosophila pseudoobscura: chromosomal, gene, and cis-element evolution.</title>
        <authorList>
            <person name="Richards S."/>
            <person name="Liu Y."/>
            <person name="Bettencourt B.R."/>
            <person name="Hradecky P."/>
            <person name="Letovsky S."/>
            <person name="Nielsen R."/>
            <person name="Thornton K."/>
            <person name="Hubisz M.J."/>
            <person name="Chen R."/>
            <person name="Meisel R.P."/>
            <person name="Couronne O."/>
            <person name="Hua S."/>
            <person name="Smith M.A."/>
            <person name="Zhang P."/>
            <person name="Liu J."/>
            <person name="Bussemaker H.J."/>
            <person name="van Batenburg M.F."/>
            <person name="Howells S.L."/>
            <person name="Scherer S.E."/>
            <person name="Sodergren E."/>
            <person name="Matthews B.B."/>
            <person name="Crosby M.A."/>
            <person name="Schroeder A.J."/>
            <person name="Ortiz-Barrientos D."/>
            <person name="Rives C.M."/>
            <person name="Metzker M.L."/>
            <person name="Muzny D.M."/>
            <person name="Scott G."/>
            <person name="Steffen D."/>
            <person name="Wheeler D.A."/>
            <person name="Worley K.C."/>
            <person name="Havlak P."/>
            <person name="Durbin K.J."/>
            <person name="Egan A."/>
            <person name="Gill R."/>
            <person name="Hume J."/>
            <person name="Morgan M.B."/>
            <person name="Miner G."/>
            <person name="Hamilton C."/>
            <person name="Huang Y."/>
            <person name="Waldron L."/>
            <person name="Verduzco D."/>
            <person name="Clerc-Blankenburg K.P."/>
            <person name="Dubchak I."/>
            <person name="Noor M.A.F."/>
            <person name="Anderson W."/>
            <person name="White K.P."/>
            <person name="Clark A.G."/>
            <person name="Schaeffer S.W."/>
            <person name="Gelbart W.M."/>
            <person name="Weinstock G.M."/>
            <person name="Gibbs R.A."/>
        </authorList>
    </citation>
    <scope>NUCLEOTIDE SEQUENCE [LARGE SCALE GENOMIC DNA]</scope>
    <source>
        <strain>MV2-25 / Tucson 14011-0121.94</strain>
    </source>
</reference>
<comment type="function">
    <text evidence="2">Phospholipase B that deacylates intracellular phosphatidylcholine (PtdCho), generating glycerophosphocholine (GroPtdCho). This deacylation occurs at both sn-2 and sn-1 positions of PtdCho. Its specific chemical modification by certain organophosphorus (OP) compounds leads to distal axonopathy. Plays a role in the signaling mechanism between neurons and glia that regulates glia wrapping during development of the adult brain. Essential for membrane lipid homeostasis and cell survival in both neurons and glia of the adult brain (By similarity).</text>
</comment>
<comment type="catalytic activity">
    <reaction evidence="2">
        <text>a 1-acyl-sn-glycero-3-phosphocholine + H2O = sn-glycerol 3-phosphocholine + a fatty acid + H(+)</text>
        <dbReference type="Rhea" id="RHEA:15177"/>
        <dbReference type="ChEBI" id="CHEBI:15377"/>
        <dbReference type="ChEBI" id="CHEBI:15378"/>
        <dbReference type="ChEBI" id="CHEBI:16870"/>
        <dbReference type="ChEBI" id="CHEBI:28868"/>
        <dbReference type="ChEBI" id="CHEBI:58168"/>
        <dbReference type="EC" id="3.1.1.5"/>
    </reaction>
</comment>
<comment type="subunit">
    <text evidence="1">Interacts with Pka-C3; interaction inhibits the catalytic function of Pka-C3 and the esterase activity of sws.</text>
</comment>
<comment type="subcellular location">
    <subcellularLocation>
        <location evidence="2">Endoplasmic reticulum membrane</location>
        <topology evidence="2">Single-pass type I membrane protein</topology>
    </subcellularLocation>
    <text evidence="2">Sws tethers Pka-C3 to the membrane.</text>
</comment>
<comment type="similarity">
    <text evidence="3">Belongs to the NTE family.</text>
</comment>
<evidence type="ECO:0000250" key="1"/>
<evidence type="ECO:0000250" key="2">
    <source>
        <dbReference type="UniProtKB" id="Q9U969"/>
    </source>
</evidence>
<evidence type="ECO:0000255" key="3"/>
<evidence type="ECO:0000255" key="4">
    <source>
        <dbReference type="PROSITE-ProRule" id="PRU01161"/>
    </source>
</evidence>
<evidence type="ECO:0000256" key="5">
    <source>
        <dbReference type="SAM" id="MobiDB-lite"/>
    </source>
</evidence>
<evidence type="ECO:0000312" key="6">
    <source>
        <dbReference type="EMBL" id="EDY72128.1"/>
    </source>
</evidence>
<sequence length="1494" mass="168444">MDVLELLRVSGSNMYYSTFLADAWCYYISNQITMTMYLYCALGVLSMLFIGWFVYFKRLARLRLRHEIARSLSAVTMASGGDLRGPRFRKRDKMLFYGRRMLRKMKNVSGQMYSSGKGYKRRAVIRFARRILQLRRENMPLEVRTVEPPAEYLEETMEGSDRVPPDALYMLQSIRIFGHFEKPIFLRLCKHTQLLELMGGDYLFKITDPDDSVYIVQSGMINVYISNADGSTLSLKTVRKGESVTSLLSFIDVLSGNPSYYKTVTAKAIEKSVVIRLPMAAFQEVFKDSPDVMIRVIQVIMIRLQRVLFTALRNYLGLNAELVQNHMRFKGSSQGAGPSVYCSQTTRQATGSASATASAAAASGTAGSTHTAVPRPASSLSRYSQDEQHTLSDPNPGIPNLELSGDSVNTLFGEVNGGARLNSYPPLYHQRESDGNLSTRRGSITQQEQPEVGPVPSIDMRLVKSSAVDSLRKELGLPEQDAHIIDPFVEVREMEPNVTLITEGNADDVCVWFVMTGTLAVYQGNADATRIKQDKTDLLIHYVHPGEIVGGLAMLTGEASAYTIRSRNHSRVAFIRRAAIYQIMRQRPRIVLDLGNGVVRRLSPLVRQCDYALDWIFLESGRALYRQDESSDSTYIVLSGRMRSVITHPGGKKEIVGEYGKGDLVGIVEMITETSRTTTVMAVRDSELAKLPEGLFNAIKLRYPIVVTKLISFLSHRFLGSMQTRTTTGAPGAPVEANPVTHKYSTVALVPITDDVPLTPFTYELYHSLCAIGPVLRLTSDLARKQLGMNIFDASNEYRLTSWLAQQEDRNIITLYQCDNALSPWTQRCMRQADVVLIVGLGDHSHLVGKFEREIDRLALRTQKELVLLYPETASSKPANTLSWLNARPWVTKHHHVLCVKRIFTRKSQYRINDLYSRVLLSEPNMHSDFSRLARWLTGNSIGLVLGGGGARGAAHIGMLKAIQEAGIPIDMVGGVSIGALMGALWCSERNITTVTQKAREWSKKMTKWFLQLLDLTYPITSMFSGREFNKTIHETFGDVNIEDLWIPYFTLTTDITASCHRIHTNGSLWRYVRSSMSLSGYMPPLCDPKDGHLLLDGGYVNNLPGHLWRYCRASMSIAGVFPPFCDYRDGHLLLDGCYTNNVPADVMHNLGAAHIIAIDVGSQDDTDLTNYGDDLSGWWLLYKKWNPFTAPVKVPDLPDIQSRLAYVSCVRQLEEVKNSDYCEYIRPPIDKYKTLAFGSFDEIRDVGYVFGKNYFEGMAKAGRLGRFNQWFSKEPPKRGNHASLNEYTFIDLAQIVCRLPETYGLNPSDLFSEDEDCDGYISEPTTLNTDVRRYQVPRGGNSLSLSETEMDMDSDVEMDLKMERKMDKATQSTPPLQSKAQILRRKHSKEEARHEWEIKREQKQELAREQELERERELSQKGTTAGATGYTPNAVIATQTSLIFMDEEDEMDKKKTKDNDRDEVRGSAEDKGKEKEEDKENRSNTNNETKNYL</sequence>
<accession>B5DKS8</accession>
<dbReference type="EC" id="3.1.1.5"/>
<dbReference type="EMBL" id="CH379063">
    <property type="protein sequence ID" value="EDY72128.1"/>
    <property type="molecule type" value="Genomic_DNA"/>
</dbReference>
<dbReference type="SMR" id="B5DKS8"/>
<dbReference type="FunCoup" id="B5DKS8">
    <property type="interactions" value="529"/>
</dbReference>
<dbReference type="STRING" id="46245.B5DKS8"/>
<dbReference type="eggNOG" id="KOG2968">
    <property type="taxonomic scope" value="Eukaryota"/>
</dbReference>
<dbReference type="HOGENOM" id="CLU_000960_1_0_1"/>
<dbReference type="InParanoid" id="B5DKS8"/>
<dbReference type="OMA" id="GQQEDRH"/>
<dbReference type="Proteomes" id="UP000001819">
    <property type="component" value="Unplaced"/>
</dbReference>
<dbReference type="GO" id="GO:0005789">
    <property type="term" value="C:endoplasmic reticulum membrane"/>
    <property type="evidence" value="ECO:0000250"/>
    <property type="project" value="UniProtKB"/>
</dbReference>
<dbReference type="GO" id="GO:0004622">
    <property type="term" value="F:lysophospholipase activity"/>
    <property type="evidence" value="ECO:0000250"/>
    <property type="project" value="UniProtKB"/>
</dbReference>
<dbReference type="GO" id="GO:0034349">
    <property type="term" value="P:glial cell apoptotic process"/>
    <property type="evidence" value="ECO:0000250"/>
    <property type="project" value="UniProtKB"/>
</dbReference>
<dbReference type="GO" id="GO:0016042">
    <property type="term" value="P:lipid catabolic process"/>
    <property type="evidence" value="ECO:0007669"/>
    <property type="project" value="UniProtKB-KW"/>
</dbReference>
<dbReference type="GO" id="GO:0006643">
    <property type="term" value="P:membrane lipid metabolic process"/>
    <property type="evidence" value="ECO:0000250"/>
    <property type="project" value="UniProtKB"/>
</dbReference>
<dbReference type="GO" id="GO:0061024">
    <property type="term" value="P:membrane organization"/>
    <property type="evidence" value="ECO:0000250"/>
    <property type="project" value="UniProtKB"/>
</dbReference>
<dbReference type="GO" id="GO:0007399">
    <property type="term" value="P:nervous system development"/>
    <property type="evidence" value="ECO:0007669"/>
    <property type="project" value="UniProtKB-KW"/>
</dbReference>
<dbReference type="GO" id="GO:0051402">
    <property type="term" value="P:neuron apoptotic process"/>
    <property type="evidence" value="ECO:0000250"/>
    <property type="project" value="UniProtKB"/>
</dbReference>
<dbReference type="GO" id="GO:0046470">
    <property type="term" value="P:phosphatidylcholine metabolic process"/>
    <property type="evidence" value="ECO:0000250"/>
    <property type="project" value="UniProtKB"/>
</dbReference>
<dbReference type="CDD" id="cd00038">
    <property type="entry name" value="CAP_ED"/>
    <property type="match status" value="3"/>
</dbReference>
<dbReference type="CDD" id="cd07225">
    <property type="entry name" value="Pat_PNPLA6_PNPLA7"/>
    <property type="match status" value="1"/>
</dbReference>
<dbReference type="FunFam" id="2.60.120.10:FF:000010">
    <property type="entry name" value="neuropathy target esterase isoform X1"/>
    <property type="match status" value="1"/>
</dbReference>
<dbReference type="FunFam" id="2.60.120.10:FF:000122">
    <property type="entry name" value="Neuropathy target esterase sws"/>
    <property type="match status" value="1"/>
</dbReference>
<dbReference type="FunFam" id="2.60.120.10:FF:000135">
    <property type="entry name" value="Neuropathy target esterase sws"/>
    <property type="match status" value="1"/>
</dbReference>
<dbReference type="FunFam" id="3.40.1090.10:FF:000022">
    <property type="entry name" value="Neuropathy target esterase sws"/>
    <property type="match status" value="1"/>
</dbReference>
<dbReference type="FunFam" id="3.40.1090.10:FF:000033">
    <property type="entry name" value="Neuropathy target esterase sws"/>
    <property type="match status" value="1"/>
</dbReference>
<dbReference type="Gene3D" id="3.40.1090.10">
    <property type="entry name" value="Cytosolic phospholipase A2 catalytic domain"/>
    <property type="match status" value="2"/>
</dbReference>
<dbReference type="Gene3D" id="2.60.120.10">
    <property type="entry name" value="Jelly Rolls"/>
    <property type="match status" value="3"/>
</dbReference>
<dbReference type="InterPro" id="IPR016035">
    <property type="entry name" value="Acyl_Trfase/lysoPLipase"/>
</dbReference>
<dbReference type="InterPro" id="IPR000595">
    <property type="entry name" value="cNMP-bd_dom"/>
</dbReference>
<dbReference type="InterPro" id="IPR018490">
    <property type="entry name" value="cNMP-bd_dom_sf"/>
</dbReference>
<dbReference type="InterPro" id="IPR001423">
    <property type="entry name" value="LysoPLipase_patatin_CS"/>
</dbReference>
<dbReference type="InterPro" id="IPR050301">
    <property type="entry name" value="NTE"/>
</dbReference>
<dbReference type="InterPro" id="IPR056556">
    <property type="entry name" value="NTE1_P-loop_dom"/>
</dbReference>
<dbReference type="InterPro" id="IPR002641">
    <property type="entry name" value="PNPLA_dom"/>
</dbReference>
<dbReference type="InterPro" id="IPR014710">
    <property type="entry name" value="RmlC-like_jellyroll"/>
</dbReference>
<dbReference type="PANTHER" id="PTHR14226:SF29">
    <property type="entry name" value="NEUROPATHY TARGET ESTERASE SWS"/>
    <property type="match status" value="1"/>
</dbReference>
<dbReference type="PANTHER" id="PTHR14226">
    <property type="entry name" value="NEUROPATHY TARGET ESTERASE/SWISS CHEESE D.MELANOGASTER"/>
    <property type="match status" value="1"/>
</dbReference>
<dbReference type="Pfam" id="PF00027">
    <property type="entry name" value="cNMP_binding"/>
    <property type="match status" value="3"/>
</dbReference>
<dbReference type="Pfam" id="PF24179">
    <property type="entry name" value="NTE_Ploop"/>
    <property type="match status" value="1"/>
</dbReference>
<dbReference type="Pfam" id="PF01734">
    <property type="entry name" value="Patatin"/>
    <property type="match status" value="1"/>
</dbReference>
<dbReference type="SMART" id="SM00100">
    <property type="entry name" value="cNMP"/>
    <property type="match status" value="3"/>
</dbReference>
<dbReference type="SUPFAM" id="SSF51206">
    <property type="entry name" value="cAMP-binding domain-like"/>
    <property type="match status" value="3"/>
</dbReference>
<dbReference type="SUPFAM" id="SSF52151">
    <property type="entry name" value="FabD/lysophospholipase-like"/>
    <property type="match status" value="2"/>
</dbReference>
<dbReference type="PROSITE" id="PS50042">
    <property type="entry name" value="CNMP_BINDING_3"/>
    <property type="match status" value="3"/>
</dbReference>
<dbReference type="PROSITE" id="PS51635">
    <property type="entry name" value="PNPLA"/>
    <property type="match status" value="1"/>
</dbReference>
<dbReference type="PROSITE" id="PS01237">
    <property type="entry name" value="UPF0028"/>
    <property type="match status" value="1"/>
</dbReference>
<gene>
    <name evidence="2" type="primary">sws</name>
    <name type="ORF">GA22927</name>
</gene>
<protein>
    <recommendedName>
        <fullName evidence="2">Neuropathy target esterase sws</fullName>
    </recommendedName>
    <alternativeName>
        <fullName evidence="2">Swiss cheese</fullName>
        <ecNumber>3.1.1.5</ecNumber>
    </alternativeName>
</protein>